<feature type="chain" id="PRO_1000023981" description="Uroporphyrinogen decarboxylase">
    <location>
        <begin position="1"/>
        <end position="354"/>
    </location>
</feature>
<feature type="binding site" evidence="1">
    <location>
        <begin position="27"/>
        <end position="31"/>
    </location>
    <ligand>
        <name>substrate</name>
    </ligand>
</feature>
<feature type="binding site" evidence="1">
    <location>
        <position position="77"/>
    </location>
    <ligand>
        <name>substrate</name>
    </ligand>
</feature>
<feature type="binding site" evidence="1">
    <location>
        <position position="154"/>
    </location>
    <ligand>
        <name>substrate</name>
    </ligand>
</feature>
<feature type="binding site" evidence="1">
    <location>
        <position position="209"/>
    </location>
    <ligand>
        <name>substrate</name>
    </ligand>
</feature>
<feature type="binding site" evidence="1">
    <location>
        <position position="327"/>
    </location>
    <ligand>
        <name>substrate</name>
    </ligand>
</feature>
<feature type="site" description="Transition state stabilizer" evidence="1">
    <location>
        <position position="77"/>
    </location>
</feature>
<name>DCUP_SODGM</name>
<proteinExistence type="inferred from homology"/>
<gene>
    <name evidence="1" type="primary">hemE</name>
    <name type="ordered locus">SG0138</name>
</gene>
<keyword id="KW-0963">Cytoplasm</keyword>
<keyword id="KW-0210">Decarboxylase</keyword>
<keyword id="KW-0456">Lyase</keyword>
<keyword id="KW-0627">Porphyrin biosynthesis</keyword>
<evidence type="ECO:0000255" key="1">
    <source>
        <dbReference type="HAMAP-Rule" id="MF_00218"/>
    </source>
</evidence>
<sequence>MSELKNDRYLRALLRQPVDVTPVWMMRQAGRYLPEYKATRAEAGDFMSLCRNADLACEVTLQPLRRFPLDATILFSDILTVPDAMGLGLWFEQGEGPRFARPIQHRRDVEQLPIPDPEQELGYVMNAVRAIRQRLQGAVPLIGFSGSPWTLATYMVEGGSSKAFTKIKQMLYAEPETLHLLLDKLADSVVLYLNGQIRAGAQAVMLFDTWGGALTGADYREFSMHYMHKIVDGLLREQDGRRVPVTLFTKGGGQWLEAMAATGCDALGLDWSTDIADARRRVGDKVALQGNMDPSVLYGSPARIEREVATILDAFGPGEGHVFNLGHGIHQDVPPAHAGHFVAAVHRLSQSYHR</sequence>
<comment type="function">
    <text evidence="1">Catalyzes the decarboxylation of four acetate groups of uroporphyrinogen-III to yield coproporphyrinogen-III.</text>
</comment>
<comment type="catalytic activity">
    <reaction evidence="1">
        <text>uroporphyrinogen III + 4 H(+) = coproporphyrinogen III + 4 CO2</text>
        <dbReference type="Rhea" id="RHEA:19865"/>
        <dbReference type="ChEBI" id="CHEBI:15378"/>
        <dbReference type="ChEBI" id="CHEBI:16526"/>
        <dbReference type="ChEBI" id="CHEBI:57308"/>
        <dbReference type="ChEBI" id="CHEBI:57309"/>
        <dbReference type="EC" id="4.1.1.37"/>
    </reaction>
</comment>
<comment type="pathway">
    <text evidence="1">Porphyrin-containing compound metabolism; protoporphyrin-IX biosynthesis; coproporphyrinogen-III from 5-aminolevulinate: step 4/4.</text>
</comment>
<comment type="subunit">
    <text evidence="1">Homodimer.</text>
</comment>
<comment type="subcellular location">
    <subcellularLocation>
        <location evidence="1">Cytoplasm</location>
    </subcellularLocation>
</comment>
<comment type="similarity">
    <text evidence="1">Belongs to the uroporphyrinogen decarboxylase family.</text>
</comment>
<protein>
    <recommendedName>
        <fullName evidence="1">Uroporphyrinogen decarboxylase</fullName>
        <shortName evidence="1">UPD</shortName>
        <shortName evidence="1">URO-D</shortName>
        <ecNumber evidence="1">4.1.1.37</ecNumber>
    </recommendedName>
</protein>
<reference key="1">
    <citation type="journal article" date="2006" name="Genome Res.">
        <title>Massive genome erosion and functional adaptations provide insights into the symbiotic lifestyle of Sodalis glossinidius in the tsetse host.</title>
        <authorList>
            <person name="Toh H."/>
            <person name="Weiss B.L."/>
            <person name="Perkin S.A.H."/>
            <person name="Yamashita A."/>
            <person name="Oshima K."/>
            <person name="Hattori M."/>
            <person name="Aksoy S."/>
        </authorList>
    </citation>
    <scope>NUCLEOTIDE SEQUENCE [LARGE SCALE GENOMIC DNA]</scope>
    <source>
        <strain>morsitans</strain>
    </source>
</reference>
<dbReference type="EC" id="4.1.1.37" evidence="1"/>
<dbReference type="EMBL" id="AP008232">
    <property type="protein sequence ID" value="BAE73413.1"/>
    <property type="molecule type" value="Genomic_DNA"/>
</dbReference>
<dbReference type="RefSeq" id="WP_011410002.1">
    <property type="nucleotide sequence ID" value="NC_007712.1"/>
</dbReference>
<dbReference type="SMR" id="Q2NWR2"/>
<dbReference type="STRING" id="343509.SG0138"/>
<dbReference type="KEGG" id="sgl:SG0138"/>
<dbReference type="eggNOG" id="COG0407">
    <property type="taxonomic scope" value="Bacteria"/>
</dbReference>
<dbReference type="HOGENOM" id="CLU_040933_0_0_6"/>
<dbReference type="OrthoDB" id="9806656at2"/>
<dbReference type="BioCyc" id="SGLO343509:SGP1_RS01165-MONOMER"/>
<dbReference type="UniPathway" id="UPA00251">
    <property type="reaction ID" value="UER00321"/>
</dbReference>
<dbReference type="Proteomes" id="UP000001932">
    <property type="component" value="Chromosome"/>
</dbReference>
<dbReference type="GO" id="GO:0005829">
    <property type="term" value="C:cytosol"/>
    <property type="evidence" value="ECO:0007669"/>
    <property type="project" value="TreeGrafter"/>
</dbReference>
<dbReference type="GO" id="GO:0004853">
    <property type="term" value="F:uroporphyrinogen decarboxylase activity"/>
    <property type="evidence" value="ECO:0007669"/>
    <property type="project" value="UniProtKB-UniRule"/>
</dbReference>
<dbReference type="GO" id="GO:0019353">
    <property type="term" value="P:protoporphyrinogen IX biosynthetic process from glutamate"/>
    <property type="evidence" value="ECO:0007669"/>
    <property type="project" value="TreeGrafter"/>
</dbReference>
<dbReference type="CDD" id="cd00717">
    <property type="entry name" value="URO-D"/>
    <property type="match status" value="1"/>
</dbReference>
<dbReference type="FunFam" id="3.20.20.210:FF:000001">
    <property type="entry name" value="Uroporphyrinogen decarboxylase"/>
    <property type="match status" value="1"/>
</dbReference>
<dbReference type="Gene3D" id="3.20.20.210">
    <property type="match status" value="1"/>
</dbReference>
<dbReference type="HAMAP" id="MF_00218">
    <property type="entry name" value="URO_D"/>
    <property type="match status" value="1"/>
</dbReference>
<dbReference type="InterPro" id="IPR038071">
    <property type="entry name" value="UROD/MetE-like_sf"/>
</dbReference>
<dbReference type="InterPro" id="IPR006361">
    <property type="entry name" value="Uroporphyrinogen_deCO2ase_HemE"/>
</dbReference>
<dbReference type="InterPro" id="IPR000257">
    <property type="entry name" value="Uroporphyrinogen_deCOase"/>
</dbReference>
<dbReference type="NCBIfam" id="TIGR01464">
    <property type="entry name" value="hemE"/>
    <property type="match status" value="1"/>
</dbReference>
<dbReference type="PANTHER" id="PTHR21091">
    <property type="entry name" value="METHYLTETRAHYDROFOLATE:HOMOCYSTEINE METHYLTRANSFERASE RELATED"/>
    <property type="match status" value="1"/>
</dbReference>
<dbReference type="PANTHER" id="PTHR21091:SF169">
    <property type="entry name" value="UROPORPHYRINOGEN DECARBOXYLASE"/>
    <property type="match status" value="1"/>
</dbReference>
<dbReference type="Pfam" id="PF01208">
    <property type="entry name" value="URO-D"/>
    <property type="match status" value="1"/>
</dbReference>
<dbReference type="SUPFAM" id="SSF51726">
    <property type="entry name" value="UROD/MetE-like"/>
    <property type="match status" value="1"/>
</dbReference>
<dbReference type="PROSITE" id="PS00906">
    <property type="entry name" value="UROD_1"/>
    <property type="match status" value="1"/>
</dbReference>
<dbReference type="PROSITE" id="PS00907">
    <property type="entry name" value="UROD_2"/>
    <property type="match status" value="1"/>
</dbReference>
<organism>
    <name type="scientific">Sodalis glossinidius (strain morsitans)</name>
    <dbReference type="NCBI Taxonomy" id="343509"/>
    <lineage>
        <taxon>Bacteria</taxon>
        <taxon>Pseudomonadati</taxon>
        <taxon>Pseudomonadota</taxon>
        <taxon>Gammaproteobacteria</taxon>
        <taxon>Enterobacterales</taxon>
        <taxon>Bruguierivoracaceae</taxon>
        <taxon>Sodalis</taxon>
    </lineage>
</organism>
<accession>Q2NWR2</accession>